<feature type="chain" id="PRO_0000435618" description="Phosphoserine phosphatase" evidence="4">
    <location>
        <begin position="1"/>
        <end position="236"/>
    </location>
</feature>
<feature type="active site" description="Nucleophile" evidence="2">
    <location>
        <position position="30"/>
    </location>
</feature>
<feature type="active site" description="Proton donor" evidence="2">
    <location>
        <position position="32"/>
    </location>
</feature>
<feature type="binding site" evidence="2">
    <location>
        <position position="30"/>
    </location>
    <ligand>
        <name>Mg(2+)</name>
        <dbReference type="ChEBI" id="CHEBI:18420"/>
    </ligand>
</feature>
<feature type="binding site" evidence="2">
    <location>
        <position position="32"/>
    </location>
    <ligand>
        <name>Mg(2+)</name>
        <dbReference type="ChEBI" id="CHEBI:18420"/>
    </ligand>
</feature>
<feature type="binding site" evidence="2">
    <location>
        <position position="39"/>
    </location>
    <ligand>
        <name>substrate</name>
    </ligand>
</feature>
<feature type="binding site" evidence="2">
    <location>
        <position position="76"/>
    </location>
    <ligand>
        <name>substrate</name>
    </ligand>
</feature>
<feature type="binding site" evidence="2">
    <location>
        <begin position="120"/>
        <end position="121"/>
    </location>
    <ligand>
        <name>substrate</name>
    </ligand>
</feature>
<feature type="binding site" evidence="2">
    <location>
        <position position="169"/>
    </location>
    <ligand>
        <name>substrate</name>
    </ligand>
</feature>
<feature type="binding site" evidence="2">
    <location>
        <position position="192"/>
    </location>
    <ligand>
        <name>Mg(2+)</name>
        <dbReference type="ChEBI" id="CHEBI:18420"/>
    </ligand>
</feature>
<feature type="binding site" evidence="2">
    <location>
        <position position="195"/>
    </location>
    <ligand>
        <name>substrate</name>
    </ligand>
</feature>
<comment type="catalytic activity">
    <reaction evidence="3">
        <text>O-phospho-L-serine + H2O = L-serine + phosphate</text>
        <dbReference type="Rhea" id="RHEA:21208"/>
        <dbReference type="ChEBI" id="CHEBI:15377"/>
        <dbReference type="ChEBI" id="CHEBI:33384"/>
        <dbReference type="ChEBI" id="CHEBI:43474"/>
        <dbReference type="ChEBI" id="CHEBI:57524"/>
        <dbReference type="EC" id="3.1.3.3"/>
    </reaction>
</comment>
<comment type="catalytic activity">
    <reaction evidence="3">
        <text>O-phospho-D-serine + H2O = D-serine + phosphate</text>
        <dbReference type="Rhea" id="RHEA:24873"/>
        <dbReference type="ChEBI" id="CHEBI:15377"/>
        <dbReference type="ChEBI" id="CHEBI:35247"/>
        <dbReference type="ChEBI" id="CHEBI:43474"/>
        <dbReference type="ChEBI" id="CHEBI:58680"/>
        <dbReference type="EC" id="3.1.3.3"/>
    </reaction>
</comment>
<comment type="cofactor">
    <cofactor evidence="3">
        <name>Mg(2+)</name>
        <dbReference type="ChEBI" id="CHEBI:18420"/>
    </cofactor>
</comment>
<comment type="pathway">
    <text evidence="4">Amino-acid biosynthesis; L-serine biosynthesis; L-serine from 3-phospho-D-glycerate: step 3/3.</text>
</comment>
<comment type="similarity">
    <text evidence="4">Belongs to the HAD-like hydrolase superfamily. SerB family.</text>
</comment>
<protein>
    <recommendedName>
        <fullName evidence="5">Phosphoserine phosphatase</fullName>
        <shortName evidence="2">PSP</shortName>
        <shortName evidence="2">PSPase</shortName>
        <ecNumber evidence="3">3.1.3.3</ecNumber>
    </recommendedName>
    <alternativeName>
        <fullName evidence="2">O-phosphoserine phosphohydrolase</fullName>
    </alternativeName>
</protein>
<name>SERB_POLSJ</name>
<reference evidence="7" key="1">
    <citation type="journal article" date="2008" name="Appl. Environ. Microbiol.">
        <title>The genome of Polaromonas sp. strain JS666: insights into the evolution of a hydrocarbon- and xenobiotic-degrading bacterium, and features of relevance to biotechnology.</title>
        <authorList>
            <person name="Mattes T.E."/>
            <person name="Alexander A.K."/>
            <person name="Richardson P.M."/>
            <person name="Munk A.C."/>
            <person name="Han C.S."/>
            <person name="Stothard P."/>
            <person name="Coleman N.V."/>
        </authorList>
    </citation>
    <scope>NUCLEOTIDE SEQUENCE [LARGE SCALE GENOMIC DNA]</scope>
    <source>
        <strain evidence="7">JS666 / ATCC BAA-500</strain>
    </source>
</reference>
<reference evidence="4" key="2">
    <citation type="journal article" date="2015" name="Proc. Natl. Acad. Sci. U.S.A.">
        <title>Panoramic view of a superfamily of phosphatases through substrate profiling.</title>
        <authorList>
            <person name="Huang H."/>
            <person name="Pandya C."/>
            <person name="Liu C."/>
            <person name="Al-Obaidi N.F."/>
            <person name="Wang M."/>
            <person name="Zheng L."/>
            <person name="Toews Keating S."/>
            <person name="Aono M."/>
            <person name="Love J.D."/>
            <person name="Evans B."/>
            <person name="Seidel R.D."/>
            <person name="Hillerich B.S."/>
            <person name="Garforth S.J."/>
            <person name="Almo S.C."/>
            <person name="Mariano P.S."/>
            <person name="Dunaway-Mariano D."/>
            <person name="Allen K.N."/>
            <person name="Farelli J.D."/>
        </authorList>
    </citation>
    <scope>CATALYTIC ACTIVITY</scope>
    <scope>COFACTOR</scope>
</reference>
<keyword id="KW-0028">Amino-acid biosynthesis</keyword>
<keyword id="KW-0378">Hydrolase</keyword>
<keyword id="KW-0460">Magnesium</keyword>
<keyword id="KW-0479">Metal-binding</keyword>
<keyword id="KW-1185">Reference proteome</keyword>
<keyword id="KW-0718">Serine biosynthesis</keyword>
<proteinExistence type="evidence at protein level"/>
<sequence length="236" mass="25646">MQPTEISPGLVVNVATPDLKLSDFKLIAFDMDSTLINIECVDEIADAAGRKAEVAAITEAAMRGEISDYKESLRQRVALLKGVSVASMDEVYRTRLRLNPGAARLVQACKDAGLKVLLVSGGFTFFTDRIRDELGIDYTRSNVLETTDGLLTGRMVDQPWGDICDGEEKRKMLLETCGQLGISPRQAIAMGDGANDLPMMGEAGLSVAYHAKPRVREQAMVAINEGGLDRLLELVK</sequence>
<evidence type="ECO:0000250" key="1">
    <source>
        <dbReference type="UniProtKB" id="P0AGB0"/>
    </source>
</evidence>
<evidence type="ECO:0000250" key="2">
    <source>
        <dbReference type="UniProtKB" id="Q58989"/>
    </source>
</evidence>
<evidence type="ECO:0000269" key="3">
    <source>
    </source>
</evidence>
<evidence type="ECO:0000305" key="4"/>
<evidence type="ECO:0000305" key="5">
    <source>
    </source>
</evidence>
<evidence type="ECO:0000312" key="6">
    <source>
        <dbReference type="EMBL" id="ABE44636.1"/>
    </source>
</evidence>
<evidence type="ECO:0000312" key="7">
    <source>
        <dbReference type="Proteomes" id="UP000001983"/>
    </source>
</evidence>
<organism evidence="7">
    <name type="scientific">Polaromonas sp. (strain JS666 / ATCC BAA-500)</name>
    <dbReference type="NCBI Taxonomy" id="296591"/>
    <lineage>
        <taxon>Bacteria</taxon>
        <taxon>Pseudomonadati</taxon>
        <taxon>Pseudomonadota</taxon>
        <taxon>Betaproteobacteria</taxon>
        <taxon>Burkholderiales</taxon>
        <taxon>Comamonadaceae</taxon>
        <taxon>Polaromonas</taxon>
    </lineage>
</organism>
<gene>
    <name evidence="1" type="primary">serB</name>
    <name evidence="6" type="ordered locus">Bpro_2720</name>
</gene>
<dbReference type="EC" id="3.1.3.3" evidence="3"/>
<dbReference type="EMBL" id="CP000316">
    <property type="protein sequence ID" value="ABE44636.1"/>
    <property type="molecule type" value="Genomic_DNA"/>
</dbReference>
<dbReference type="RefSeq" id="WP_011483634.1">
    <property type="nucleotide sequence ID" value="NC_007948.1"/>
</dbReference>
<dbReference type="SMR" id="Q12A06"/>
<dbReference type="STRING" id="296591.Bpro_2720"/>
<dbReference type="KEGG" id="pol:Bpro_2720"/>
<dbReference type="eggNOG" id="COG0560">
    <property type="taxonomic scope" value="Bacteria"/>
</dbReference>
<dbReference type="HOGENOM" id="CLU_036368_4_3_4"/>
<dbReference type="OrthoDB" id="9792539at2"/>
<dbReference type="UniPathway" id="UPA00135">
    <property type="reaction ID" value="UER00198"/>
</dbReference>
<dbReference type="Proteomes" id="UP000001983">
    <property type="component" value="Chromosome"/>
</dbReference>
<dbReference type="GO" id="GO:0005737">
    <property type="term" value="C:cytoplasm"/>
    <property type="evidence" value="ECO:0007669"/>
    <property type="project" value="TreeGrafter"/>
</dbReference>
<dbReference type="GO" id="GO:0036424">
    <property type="term" value="F:L-phosphoserine phosphatase activity"/>
    <property type="evidence" value="ECO:0007669"/>
    <property type="project" value="InterPro"/>
</dbReference>
<dbReference type="GO" id="GO:0000287">
    <property type="term" value="F:magnesium ion binding"/>
    <property type="evidence" value="ECO:0007669"/>
    <property type="project" value="TreeGrafter"/>
</dbReference>
<dbReference type="GO" id="GO:0006564">
    <property type="term" value="P:L-serine biosynthetic process"/>
    <property type="evidence" value="ECO:0007669"/>
    <property type="project" value="UniProtKB-KW"/>
</dbReference>
<dbReference type="CDD" id="cd07500">
    <property type="entry name" value="HAD_PSP"/>
    <property type="match status" value="1"/>
</dbReference>
<dbReference type="Gene3D" id="3.40.50.1000">
    <property type="entry name" value="HAD superfamily/HAD-like"/>
    <property type="match status" value="1"/>
</dbReference>
<dbReference type="InterPro" id="IPR050582">
    <property type="entry name" value="HAD-like_SerB"/>
</dbReference>
<dbReference type="InterPro" id="IPR036412">
    <property type="entry name" value="HAD-like_sf"/>
</dbReference>
<dbReference type="InterPro" id="IPR023214">
    <property type="entry name" value="HAD_sf"/>
</dbReference>
<dbReference type="InterPro" id="IPR004469">
    <property type="entry name" value="PSP"/>
</dbReference>
<dbReference type="NCBIfam" id="TIGR01488">
    <property type="entry name" value="HAD-SF-IB"/>
    <property type="match status" value="1"/>
</dbReference>
<dbReference type="NCBIfam" id="TIGR00338">
    <property type="entry name" value="serB"/>
    <property type="match status" value="1"/>
</dbReference>
<dbReference type="PANTHER" id="PTHR43344">
    <property type="entry name" value="PHOSPHOSERINE PHOSPHATASE"/>
    <property type="match status" value="1"/>
</dbReference>
<dbReference type="PANTHER" id="PTHR43344:SF2">
    <property type="entry name" value="PHOSPHOSERINE PHOSPHATASE"/>
    <property type="match status" value="1"/>
</dbReference>
<dbReference type="Pfam" id="PF12710">
    <property type="entry name" value="HAD"/>
    <property type="match status" value="1"/>
</dbReference>
<dbReference type="SFLD" id="SFLDG01137">
    <property type="entry name" value="C1.6.1:_Phosphoserine_Phosphat"/>
    <property type="match status" value="1"/>
</dbReference>
<dbReference type="SFLD" id="SFLDF00029">
    <property type="entry name" value="phosphoserine_phosphatase"/>
    <property type="match status" value="1"/>
</dbReference>
<dbReference type="SUPFAM" id="SSF56784">
    <property type="entry name" value="HAD-like"/>
    <property type="match status" value="1"/>
</dbReference>
<accession>Q12A06</accession>